<reference key="1">
    <citation type="journal article" date="1995" name="Mol. Cell. Biol.">
        <title>The maf proto-oncogene stimulates transcription from multiple sites in a promoter that directs Purkinje neuron-specific gene expression.</title>
        <authorList>
            <person name="Kurschner C."/>
            <person name="Morgan J.I."/>
        </authorList>
    </citation>
    <scope>NUCLEOTIDE SEQUENCE [MRNA] (ISOFORM 1)</scope>
    <source>
        <strain>BALB/cJ</strain>
        <tissue>Cerebellum</tissue>
    </source>
</reference>
<reference key="2">
    <citation type="journal article" date="2004" name="J. Biol. Chem.">
        <title>Mafs, Prox1, and Pax6 can regulate chicken betaB1-crystallin gene expression.</title>
        <authorList>
            <person name="Cui W."/>
            <person name="Tomarev S.I."/>
            <person name="Piatigorsky J."/>
            <person name="Chepelinsky A.B."/>
            <person name="Duncan M.K."/>
        </authorList>
    </citation>
    <scope>NUCLEOTIDE SEQUENCE [MRNA] (ISOFORM 2)</scope>
</reference>
<reference key="3">
    <citation type="journal article" date="2005" name="Science">
        <title>The transcriptional landscape of the mammalian genome.</title>
        <authorList>
            <person name="Carninci P."/>
            <person name="Kasukawa T."/>
            <person name="Katayama S."/>
            <person name="Gough J."/>
            <person name="Frith M.C."/>
            <person name="Maeda N."/>
            <person name="Oyama R."/>
            <person name="Ravasi T."/>
            <person name="Lenhard B."/>
            <person name="Wells C."/>
            <person name="Kodzius R."/>
            <person name="Shimokawa K."/>
            <person name="Bajic V.B."/>
            <person name="Brenner S.E."/>
            <person name="Batalov S."/>
            <person name="Forrest A.R."/>
            <person name="Zavolan M."/>
            <person name="Davis M.J."/>
            <person name="Wilming L.G."/>
            <person name="Aidinis V."/>
            <person name="Allen J.E."/>
            <person name="Ambesi-Impiombato A."/>
            <person name="Apweiler R."/>
            <person name="Aturaliya R.N."/>
            <person name="Bailey T.L."/>
            <person name="Bansal M."/>
            <person name="Baxter L."/>
            <person name="Beisel K.W."/>
            <person name="Bersano T."/>
            <person name="Bono H."/>
            <person name="Chalk A.M."/>
            <person name="Chiu K.P."/>
            <person name="Choudhary V."/>
            <person name="Christoffels A."/>
            <person name="Clutterbuck D.R."/>
            <person name="Crowe M.L."/>
            <person name="Dalla E."/>
            <person name="Dalrymple B.P."/>
            <person name="de Bono B."/>
            <person name="Della Gatta G."/>
            <person name="di Bernardo D."/>
            <person name="Down T."/>
            <person name="Engstrom P."/>
            <person name="Fagiolini M."/>
            <person name="Faulkner G."/>
            <person name="Fletcher C.F."/>
            <person name="Fukushima T."/>
            <person name="Furuno M."/>
            <person name="Futaki S."/>
            <person name="Gariboldi M."/>
            <person name="Georgii-Hemming P."/>
            <person name="Gingeras T.R."/>
            <person name="Gojobori T."/>
            <person name="Green R.E."/>
            <person name="Gustincich S."/>
            <person name="Harbers M."/>
            <person name="Hayashi Y."/>
            <person name="Hensch T.K."/>
            <person name="Hirokawa N."/>
            <person name="Hill D."/>
            <person name="Huminiecki L."/>
            <person name="Iacono M."/>
            <person name="Ikeo K."/>
            <person name="Iwama A."/>
            <person name="Ishikawa T."/>
            <person name="Jakt M."/>
            <person name="Kanapin A."/>
            <person name="Katoh M."/>
            <person name="Kawasawa Y."/>
            <person name="Kelso J."/>
            <person name="Kitamura H."/>
            <person name="Kitano H."/>
            <person name="Kollias G."/>
            <person name="Krishnan S.P."/>
            <person name="Kruger A."/>
            <person name="Kummerfeld S.K."/>
            <person name="Kurochkin I.V."/>
            <person name="Lareau L.F."/>
            <person name="Lazarevic D."/>
            <person name="Lipovich L."/>
            <person name="Liu J."/>
            <person name="Liuni S."/>
            <person name="McWilliam S."/>
            <person name="Madan Babu M."/>
            <person name="Madera M."/>
            <person name="Marchionni L."/>
            <person name="Matsuda H."/>
            <person name="Matsuzawa S."/>
            <person name="Miki H."/>
            <person name="Mignone F."/>
            <person name="Miyake S."/>
            <person name="Morris K."/>
            <person name="Mottagui-Tabar S."/>
            <person name="Mulder N."/>
            <person name="Nakano N."/>
            <person name="Nakauchi H."/>
            <person name="Ng P."/>
            <person name="Nilsson R."/>
            <person name="Nishiguchi S."/>
            <person name="Nishikawa S."/>
            <person name="Nori F."/>
            <person name="Ohara O."/>
            <person name="Okazaki Y."/>
            <person name="Orlando V."/>
            <person name="Pang K.C."/>
            <person name="Pavan W.J."/>
            <person name="Pavesi G."/>
            <person name="Pesole G."/>
            <person name="Petrovsky N."/>
            <person name="Piazza S."/>
            <person name="Reed J."/>
            <person name="Reid J.F."/>
            <person name="Ring B.Z."/>
            <person name="Ringwald M."/>
            <person name="Rost B."/>
            <person name="Ruan Y."/>
            <person name="Salzberg S.L."/>
            <person name="Sandelin A."/>
            <person name="Schneider C."/>
            <person name="Schoenbach C."/>
            <person name="Sekiguchi K."/>
            <person name="Semple C.A."/>
            <person name="Seno S."/>
            <person name="Sessa L."/>
            <person name="Sheng Y."/>
            <person name="Shibata Y."/>
            <person name="Shimada H."/>
            <person name="Shimada K."/>
            <person name="Silva D."/>
            <person name="Sinclair B."/>
            <person name="Sperling S."/>
            <person name="Stupka E."/>
            <person name="Sugiura K."/>
            <person name="Sultana R."/>
            <person name="Takenaka Y."/>
            <person name="Taki K."/>
            <person name="Tammoja K."/>
            <person name="Tan S.L."/>
            <person name="Tang S."/>
            <person name="Taylor M.S."/>
            <person name="Tegner J."/>
            <person name="Teichmann S.A."/>
            <person name="Ueda H.R."/>
            <person name="van Nimwegen E."/>
            <person name="Verardo R."/>
            <person name="Wei C.L."/>
            <person name="Yagi K."/>
            <person name="Yamanishi H."/>
            <person name="Zabarovsky E."/>
            <person name="Zhu S."/>
            <person name="Zimmer A."/>
            <person name="Hide W."/>
            <person name="Bult C."/>
            <person name="Grimmond S.M."/>
            <person name="Teasdale R.D."/>
            <person name="Liu E.T."/>
            <person name="Brusic V."/>
            <person name="Quackenbush J."/>
            <person name="Wahlestedt C."/>
            <person name="Mattick J.S."/>
            <person name="Hume D.A."/>
            <person name="Kai C."/>
            <person name="Sasaki D."/>
            <person name="Tomaru Y."/>
            <person name="Fukuda S."/>
            <person name="Kanamori-Katayama M."/>
            <person name="Suzuki M."/>
            <person name="Aoki J."/>
            <person name="Arakawa T."/>
            <person name="Iida J."/>
            <person name="Imamura K."/>
            <person name="Itoh M."/>
            <person name="Kato T."/>
            <person name="Kawaji H."/>
            <person name="Kawagashira N."/>
            <person name="Kawashima T."/>
            <person name="Kojima M."/>
            <person name="Kondo S."/>
            <person name="Konno H."/>
            <person name="Nakano K."/>
            <person name="Ninomiya N."/>
            <person name="Nishio T."/>
            <person name="Okada M."/>
            <person name="Plessy C."/>
            <person name="Shibata K."/>
            <person name="Shiraki T."/>
            <person name="Suzuki S."/>
            <person name="Tagami M."/>
            <person name="Waki K."/>
            <person name="Watahiki A."/>
            <person name="Okamura-Oho Y."/>
            <person name="Suzuki H."/>
            <person name="Kawai J."/>
            <person name="Hayashizaki Y."/>
        </authorList>
    </citation>
    <scope>NUCLEOTIDE SEQUENCE [LARGE SCALE MRNA] (ISOFORM 3)</scope>
    <source>
        <strain>C57BL/6J</strain>
        <tissue>Head</tissue>
    </source>
</reference>
<reference key="4">
    <citation type="journal article" date="2009" name="PLoS Biol.">
        <title>Lineage-specific biology revealed by a finished genome assembly of the mouse.</title>
        <authorList>
            <person name="Church D.M."/>
            <person name="Goodstadt L."/>
            <person name="Hillier L.W."/>
            <person name="Zody M.C."/>
            <person name="Goldstein S."/>
            <person name="She X."/>
            <person name="Bult C.J."/>
            <person name="Agarwala R."/>
            <person name="Cherry J.L."/>
            <person name="DiCuccio M."/>
            <person name="Hlavina W."/>
            <person name="Kapustin Y."/>
            <person name="Meric P."/>
            <person name="Maglott D."/>
            <person name="Birtle Z."/>
            <person name="Marques A.C."/>
            <person name="Graves T."/>
            <person name="Zhou S."/>
            <person name="Teague B."/>
            <person name="Potamousis K."/>
            <person name="Churas C."/>
            <person name="Place M."/>
            <person name="Herschleb J."/>
            <person name="Runnheim R."/>
            <person name="Forrest D."/>
            <person name="Amos-Landgraf J."/>
            <person name="Schwartz D.C."/>
            <person name="Cheng Z."/>
            <person name="Lindblad-Toh K."/>
            <person name="Eichler E.E."/>
            <person name="Ponting C.P."/>
        </authorList>
    </citation>
    <scope>NUCLEOTIDE SEQUENCE [LARGE SCALE GENOMIC DNA]</scope>
    <source>
        <strain>C57BL/6J</strain>
    </source>
</reference>
<reference key="5">
    <citation type="journal article" date="1997" name="Biochem. Biophys. Res. Commun.">
        <title>USF2/FIP associates with the b-Zip transcription factor, c-Maf, via its bHLH domain and inhibits c-Maf DNA binding activity.</title>
        <authorList>
            <person name="Kurschner C."/>
            <person name="Morgan J.I."/>
        </authorList>
    </citation>
    <scope>FUNCTION</scope>
    <scope>HETEROTETRAMER</scope>
    <scope>INTERACTION WITH USF2</scope>
    <scope>MUTAGENESIS OF LEU-334</scope>
</reference>
<reference key="6">
    <citation type="journal article" date="1998" name="Mol. Cell. Biol.">
        <title>c-Maf interacts with c-Myb to regulate transcription of an early myeloid gene during differentiation.</title>
        <authorList>
            <person name="Hedge S.P."/>
            <person name="Kumar A."/>
            <person name="Kurschner C."/>
            <person name="Shapiro L.H."/>
        </authorList>
    </citation>
    <scope>FUNCTION</scope>
    <scope>INTERACTION WITH ETS1 AND MYB</scope>
</reference>
<reference key="7">
    <citation type="journal article" date="1999" name="Immunity">
        <title>The transcription factor c-Maf controls the production of interleukin-4 but not other Th2 cytokines.</title>
        <authorList>
            <person name="Kim J.I."/>
            <person name="Ho I.-C."/>
            <person name="Grusby M.J."/>
            <person name="Glimcher L.H."/>
        </authorList>
    </citation>
    <scope>FUNCTION</scope>
    <scope>DISRUPTION PHENOTYPE</scope>
</reference>
<reference key="8">
    <citation type="journal article" date="1999" name="J. Biol. Chem.">
        <title>Regulation of lens fiber cell differentiation by transcription factor c-Maf.</title>
        <authorList>
            <person name="Kawauchi S."/>
            <person name="Takahashi S."/>
            <person name="Nakajima O."/>
            <person name="Ogino H."/>
            <person name="Morita M."/>
            <person name="Nishizawa M."/>
            <person name="Yasuda K."/>
            <person name="Yamamoto M."/>
        </authorList>
    </citation>
    <scope>FUNCTION</scope>
    <scope>DISRUPTION PHENOTYPE</scope>
    <scope>DEVELOPMENTAL STAGE</scope>
</reference>
<reference key="9">
    <citation type="journal article" date="1999" name="Proc. Natl. Acad. Sci. U.S.A.">
        <title>Requirement for the c-Maf transcription factor in crystallin gene regulation and lens development.</title>
        <authorList>
            <person name="Kim J.I."/>
            <person name="Li T."/>
            <person name="Ho I.C."/>
            <person name="Grusby M.J."/>
            <person name="Glimcher L.H."/>
        </authorList>
    </citation>
    <scope>FUNCTION</scope>
    <scope>DISRUPTION PHENOTYPE</scope>
</reference>
<reference key="10">
    <citation type="journal article" date="2000" name="Development">
        <title>Regulation of mouse lens fiber cell development and differentiation by the Maf gene.</title>
        <authorList>
            <person name="Ring B.Z."/>
            <person name="Cordes S.P."/>
            <person name="Overbeek P.A."/>
            <person name="Barsh G.S."/>
        </authorList>
    </citation>
    <scope>FUNCTION</scope>
    <scope>DNA-BINDING</scope>
    <scope>DISRUPTION PHENOTYPE</scope>
    <scope>DEVELOPMENTAL STAGE</scope>
</reference>
<reference key="11">
    <citation type="journal article" date="2002" name="J. Biol. Chem.">
        <title>CREB-binding protein/p300 co-activation of crystallin gene expression.</title>
        <authorList>
            <person name="Chen Q."/>
            <person name="Dowhan D.H."/>
            <person name="Liang D."/>
            <person name="Moore D.D."/>
            <person name="Overbeek P.A."/>
        </authorList>
    </citation>
    <scope>FUNCTION</scope>
    <scope>INTERACTION WITH CREBBP AND EP300</scope>
</reference>
<reference key="12">
    <citation type="journal article" date="2003" name="Dev. Biol.">
        <title>Absence of transcription factor c-maf causes abnormal terminal differentiation of hypertrophic chondrocytes during endochondral bone development.</title>
        <authorList>
            <person name="MacLean H.E."/>
            <person name="Kim J.I."/>
            <person name="Glimcher M.J."/>
            <person name="Wang J."/>
            <person name="Kronenberg H.M."/>
            <person name="Glimcher L.H."/>
        </authorList>
    </citation>
    <scope>FUNCTION</scope>
    <scope>DISRUPTION PHENOTYPE</scope>
    <scope>DEVELOPMENTAL STAGE</scope>
</reference>
<reference key="13">
    <citation type="journal article" date="2004" name="Biochem. Biophys. Res. Commun.">
        <title>Developmental contribution of c-maf in the kidney: distribution and developmental study of c-maf mRNA in normal mice kidney and histological study of c-maf knockout mice kidney and liver.</title>
        <authorList>
            <person name="Imaki J."/>
            <person name="Tsuchiya K."/>
            <person name="Mishima T."/>
            <person name="Onodera H."/>
            <person name="Kim J.I."/>
            <person name="Yoshida K."/>
            <person name="Ikeda H."/>
            <person name="Sakai M."/>
        </authorList>
    </citation>
    <scope>DEVELOPMENTAL STAGE</scope>
    <scope>TISSUE SPECIFICITY</scope>
</reference>
<reference key="14">
    <citation type="journal article" date="2007" name="Eur. J. Immunol.">
        <title>c-Maf interacts with c-Myb to down-regulate Bcl-2 expression and increase apoptosis in peripheral CD4 cells.</title>
        <authorList>
            <person name="Peng S."/>
            <person name="Lalani S."/>
            <person name="Leavenworth J.W."/>
            <person name="Ho I.-C."/>
            <person name="Pauza M.E."/>
        </authorList>
    </citation>
    <scope>FUNCTION</scope>
    <scope>INTERACTION WITH MYB</scope>
</reference>
<reference key="15">
    <citation type="journal article" date="2007" name="Gene">
        <title>CD13/APN transcription is regulated by the proto-oncogene c-Maf via an atypical response element.</title>
        <authorList>
            <person name="Mahoney K.M."/>
            <person name="Petrovic N."/>
            <person name="Schacke W."/>
            <person name="Shapiro L.H."/>
        </authorList>
    </citation>
    <scope>FUNCTION</scope>
    <scope>MUTAGENESIS OF SER-15 AND SER-70</scope>
    <scope>DNA-BINDING</scope>
    <scope>TISSUE SPECIFICITY</scope>
</reference>
<reference key="16">
    <citation type="journal article" date="2007" name="J. Biol. Chem.">
        <title>Pax-6 and c-Maf functionally interact with the alpha-cell-specific DNA element G1 in vivo to promote glucagon gene expression.</title>
        <authorList>
            <person name="Gosmain Y."/>
            <person name="Avril I."/>
            <person name="Mamin A."/>
            <person name="Philippe J."/>
        </authorList>
    </citation>
    <scope>FUNCTION</scope>
    <scope>SUBUNIT</scope>
    <scope>INTERACTION WITH PAX6</scope>
    <scope>DNA-BINDING</scope>
    <scope>TISSUE SPECIFICITY</scope>
    <scope>DEVELOPMENTAL STAGE</scope>
</reference>
<reference key="17">
    <citation type="journal article" date="2008" name="Nat. Rev. Cancer">
        <title>A new MAFia in cancer.</title>
        <authorList>
            <person name="Eychene A."/>
            <person name="Rocques N."/>
            <person name="Pouponnot C."/>
        </authorList>
    </citation>
    <scope>REVIEW</scope>
    <scope>FUNCTION</scope>
</reference>
<name>MAF_MOUSE</name>
<gene>
    <name type="primary">Maf</name>
    <name type="synonym">Maf2</name>
</gene>
<keyword id="KW-0010">Activator</keyword>
<keyword id="KW-0025">Alternative splicing</keyword>
<keyword id="KW-0238">DNA-binding</keyword>
<keyword id="KW-1017">Isopeptide bond</keyword>
<keyword id="KW-0539">Nucleus</keyword>
<keyword id="KW-0656">Proto-oncogene</keyword>
<keyword id="KW-1185">Reference proteome</keyword>
<keyword id="KW-0678">Repressor</keyword>
<keyword id="KW-0804">Transcription</keyword>
<keyword id="KW-0805">Transcription regulation</keyword>
<keyword id="KW-0043">Tumor suppressor</keyword>
<keyword id="KW-0832">Ubl conjugation</keyword>
<protein>
    <recommendedName>
        <fullName>Transcription factor Maf</fullName>
    </recommendedName>
    <alternativeName>
        <fullName>Proto-oncogene c-Maf</fullName>
    </alternativeName>
    <alternativeName>
        <fullName>V-maf musculoaponeurotic fibrosarcoma oncogene homolog</fullName>
    </alternativeName>
</protein>
<feature type="chain" id="PRO_0000076492" description="Transcription factor Maf">
    <location>
        <begin position="1"/>
        <end position="370"/>
    </location>
</feature>
<feature type="domain" description="bZIP" evidence="3">
    <location>
        <begin position="285"/>
        <end position="348"/>
    </location>
</feature>
<feature type="region of interest" description="Disordered" evidence="4">
    <location>
        <begin position="57"/>
        <end position="84"/>
    </location>
</feature>
<feature type="region of interest" description="Represses ARE-mediated transcription" evidence="1">
    <location>
        <begin position="126"/>
        <end position="370"/>
    </location>
</feature>
<feature type="region of interest" description="Disordered" evidence="4">
    <location>
        <begin position="175"/>
        <end position="244"/>
    </location>
</feature>
<feature type="region of interest" description="Basic motif" evidence="3">
    <location>
        <begin position="285"/>
        <end position="310"/>
    </location>
</feature>
<feature type="region of interest" description="Leucine-zipper" evidence="3">
    <location>
        <begin position="313"/>
        <end position="334"/>
    </location>
</feature>
<feature type="compositionally biased region" description="Low complexity" evidence="4">
    <location>
        <begin position="72"/>
        <end position="82"/>
    </location>
</feature>
<feature type="compositionally biased region" description="Basic residues" evidence="4">
    <location>
        <begin position="180"/>
        <end position="195"/>
    </location>
</feature>
<feature type="compositionally biased region" description="Low complexity" evidence="4">
    <location>
        <begin position="196"/>
        <end position="211"/>
    </location>
</feature>
<feature type="compositionally biased region" description="Gly residues" evidence="4">
    <location>
        <begin position="212"/>
        <end position="241"/>
    </location>
</feature>
<feature type="cross-link" description="Glycyl lysine isopeptide (Lys-Gly) (interchain with G-Cter in SUMO2)" evidence="2">
    <location>
        <position position="29"/>
    </location>
</feature>
<feature type="cross-link" description="Glycyl lysine isopeptide (Lys-Gly) (interchain with G-Cter in SUMO2)" evidence="2">
    <location>
        <position position="33"/>
    </location>
</feature>
<feature type="cross-link" description="Glycyl lysine isopeptide (Lys-Gly) (interchain with G-Cter in SUMO2)" evidence="2">
    <location>
        <position position="328"/>
    </location>
</feature>
<feature type="splice variant" id="VSP_036408" description="In isoform 2." evidence="18">
    <original>M</original>
    <variation>MCVCVCALFIL</variation>
    <location>
        <position position="370"/>
    </location>
</feature>
<feature type="splice variant" id="VSP_036409" description="In isoform 3." evidence="19">
    <original>M</original>
    <variation>MYPRDSSTSVM</variation>
    <location>
        <position position="370"/>
    </location>
</feature>
<feature type="mutagenesis site" description="Inhibition on transcriptional activation on CD13 proximal promoter in endothelial cells." evidence="13">
    <original>S</original>
    <variation>A</variation>
    <location>
        <position position="15"/>
    </location>
</feature>
<feature type="mutagenesis site" description="No effect on transcriptional activation on CD13 proximal promoter. Increases liver specific transactivation on the IL-4 promoter." evidence="13">
    <original>S</original>
    <variation>A</variation>
    <location>
        <position position="70"/>
    </location>
</feature>
<feature type="mutagenesis site" description="Abolishes interaction with USF2." evidence="16">
    <original>L</original>
    <variation>P</variation>
    <location>
        <position position="334"/>
    </location>
</feature>
<feature type="sequence conflict" description="In Ref. 1; AAB32820." evidence="20" ref="1">
    <original>A</original>
    <variation>T</variation>
    <location>
        <position position="202"/>
    </location>
</feature>
<feature type="sequence conflict" description="In Ref. 1; AAB32820." evidence="20" ref="1">
    <original>ASAS</original>
    <variation>SSSN</variation>
    <location>
        <begin position="208"/>
        <end position="211"/>
    </location>
</feature>
<feature type="sequence conflict" description="In Ref. 1; AAB32820." evidence="20" ref="1">
    <original>SA</original>
    <variation>NT</variation>
    <location>
        <begin position="223"/>
        <end position="224"/>
    </location>
</feature>
<feature type="sequence conflict" description="In Ref. 1; AAB32820." evidence="20" ref="1">
    <original>G</original>
    <variation>D</variation>
    <location>
        <position position="231"/>
    </location>
</feature>
<feature type="sequence conflict" description="In Ref. 1; AAB32820." evidence="20" ref="1">
    <original>A</original>
    <variation>S</variation>
    <location>
        <position position="248"/>
    </location>
</feature>
<dbReference type="EMBL" id="S74567">
    <property type="protein sequence ID" value="AAB32820.1"/>
    <property type="molecule type" value="mRNA"/>
</dbReference>
<dbReference type="EMBL" id="AY560005">
    <property type="protein sequence ID" value="AAY81957.1"/>
    <property type="molecule type" value="mRNA"/>
</dbReference>
<dbReference type="EMBL" id="AK132165">
    <property type="protein sequence ID" value="BAE21007.1"/>
    <property type="molecule type" value="mRNA"/>
</dbReference>
<dbReference type="EMBL" id="AC113301">
    <property type="status" value="NOT_ANNOTATED_CDS"/>
    <property type="molecule type" value="Genomic_DNA"/>
</dbReference>
<dbReference type="CCDS" id="CCDS40486.1">
    <molecule id="P54843-1"/>
</dbReference>
<dbReference type="RefSeq" id="NP_001020748.2">
    <molecule id="P54843-1"/>
    <property type="nucleotide sequence ID" value="NM_001025577.3"/>
</dbReference>
<dbReference type="RefSeq" id="NP_001423153.1">
    <molecule id="P54843-3"/>
    <property type="nucleotide sequence ID" value="NM_001436224.1"/>
</dbReference>
<dbReference type="SMR" id="P54843"/>
<dbReference type="BioGRID" id="201281">
    <property type="interactions" value="3"/>
</dbReference>
<dbReference type="FunCoup" id="P54843">
    <property type="interactions" value="2115"/>
</dbReference>
<dbReference type="IntAct" id="P54843">
    <property type="interactions" value="2"/>
</dbReference>
<dbReference type="MINT" id="P54843"/>
<dbReference type="STRING" id="10090.ENSMUSP00000104732"/>
<dbReference type="iPTMnet" id="P54843"/>
<dbReference type="PhosphoSitePlus" id="P54843"/>
<dbReference type="PaxDb" id="10090-ENSMUSP00000104732"/>
<dbReference type="ProteomicsDB" id="287293">
    <molecule id="P54843-1"/>
</dbReference>
<dbReference type="ProteomicsDB" id="287294">
    <molecule id="P54843-2"/>
</dbReference>
<dbReference type="ProteomicsDB" id="287295">
    <molecule id="P54843-3"/>
</dbReference>
<dbReference type="Antibodypedia" id="4143">
    <property type="antibodies" value="511 antibodies from 39 providers"/>
</dbReference>
<dbReference type="DNASU" id="17132"/>
<dbReference type="Ensembl" id="ENSMUST00000069009.7">
    <molecule id="P54843-3"/>
    <property type="protein sequence ID" value="ENSMUSP00000067704.7"/>
    <property type="gene ID" value="ENSMUSG00000055435.7"/>
</dbReference>
<dbReference type="Ensembl" id="ENSMUST00000109104.2">
    <molecule id="P54843-1"/>
    <property type="protein sequence ID" value="ENSMUSP00000104732.2"/>
    <property type="gene ID" value="ENSMUSG00000055435.7"/>
</dbReference>
<dbReference type="GeneID" id="17132"/>
<dbReference type="KEGG" id="mmu:17132"/>
<dbReference type="UCSC" id="uc009noe.2">
    <molecule id="P54843-3"/>
    <property type="organism name" value="mouse"/>
</dbReference>
<dbReference type="UCSC" id="uc009nof.1">
    <molecule id="P54843-1"/>
    <property type="organism name" value="mouse"/>
</dbReference>
<dbReference type="AGR" id="MGI:96909"/>
<dbReference type="CTD" id="4094"/>
<dbReference type="MGI" id="MGI:96909">
    <property type="gene designation" value="Maf"/>
</dbReference>
<dbReference type="VEuPathDB" id="HostDB:ENSMUSG00000055435"/>
<dbReference type="eggNOG" id="KOG4196">
    <property type="taxonomic scope" value="Eukaryota"/>
</dbReference>
<dbReference type="GeneTree" id="ENSGT00940000161531"/>
<dbReference type="HOGENOM" id="CLU_063062_0_0_1"/>
<dbReference type="InParanoid" id="P54843"/>
<dbReference type="OMA" id="GTVHPHM"/>
<dbReference type="OrthoDB" id="75409at9989"/>
<dbReference type="PhylomeDB" id="P54843"/>
<dbReference type="TreeFam" id="TF325689"/>
<dbReference type="BioGRID-ORCS" id="17132">
    <property type="hits" value="1 hit in 81 CRISPR screens"/>
</dbReference>
<dbReference type="ChiTaRS" id="Maf">
    <property type="organism name" value="mouse"/>
</dbReference>
<dbReference type="PRO" id="PR:P54843"/>
<dbReference type="Proteomes" id="UP000000589">
    <property type="component" value="Chromosome 8"/>
</dbReference>
<dbReference type="RNAct" id="P54843">
    <property type="molecule type" value="protein"/>
</dbReference>
<dbReference type="Bgee" id="ENSMUSG00000055435">
    <property type="expression patterns" value="Expressed in stroma of bone marrow and 253 other cell types or tissues"/>
</dbReference>
<dbReference type="GO" id="GO:0005737">
    <property type="term" value="C:cytoplasm"/>
    <property type="evidence" value="ECO:0000314"/>
    <property type="project" value="MGI"/>
</dbReference>
<dbReference type="GO" id="GO:0005654">
    <property type="term" value="C:nucleoplasm"/>
    <property type="evidence" value="ECO:0000304"/>
    <property type="project" value="Reactome"/>
</dbReference>
<dbReference type="GO" id="GO:0005634">
    <property type="term" value="C:nucleus"/>
    <property type="evidence" value="ECO:0000314"/>
    <property type="project" value="MGI"/>
</dbReference>
<dbReference type="GO" id="GO:0090575">
    <property type="term" value="C:RNA polymerase II transcription regulator complex"/>
    <property type="evidence" value="ECO:0007669"/>
    <property type="project" value="Ensembl"/>
</dbReference>
<dbReference type="GO" id="GO:0003677">
    <property type="term" value="F:DNA binding"/>
    <property type="evidence" value="ECO:0000314"/>
    <property type="project" value="MGI"/>
</dbReference>
<dbReference type="GO" id="GO:0001228">
    <property type="term" value="F:DNA-binding transcription activator activity, RNA polymerase II-specific"/>
    <property type="evidence" value="ECO:0000314"/>
    <property type="project" value="MGI"/>
</dbReference>
<dbReference type="GO" id="GO:0003700">
    <property type="term" value="F:DNA-binding transcription factor activity"/>
    <property type="evidence" value="ECO:0000314"/>
    <property type="project" value="MGI"/>
</dbReference>
<dbReference type="GO" id="GO:0042802">
    <property type="term" value="F:identical protein binding"/>
    <property type="evidence" value="ECO:0007669"/>
    <property type="project" value="Ensembl"/>
</dbReference>
<dbReference type="GO" id="GO:0043565">
    <property type="term" value="F:sequence-specific DNA binding"/>
    <property type="evidence" value="ECO:0000314"/>
    <property type="project" value="MGI"/>
</dbReference>
<dbReference type="GO" id="GO:1990837">
    <property type="term" value="F:sequence-specific double-stranded DNA binding"/>
    <property type="evidence" value="ECO:0007669"/>
    <property type="project" value="Ensembl"/>
</dbReference>
<dbReference type="GO" id="GO:0048468">
    <property type="term" value="P:cell development"/>
    <property type="evidence" value="ECO:0000315"/>
    <property type="project" value="MGI"/>
</dbReference>
<dbReference type="GO" id="GO:0010467">
    <property type="term" value="P:gene expression"/>
    <property type="evidence" value="ECO:0000315"/>
    <property type="project" value="MGI"/>
</dbReference>
<dbReference type="GO" id="GO:0001701">
    <property type="term" value="P:in utero embryonic development"/>
    <property type="evidence" value="ECO:0000315"/>
    <property type="project" value="MGI"/>
</dbReference>
<dbReference type="GO" id="GO:0048839">
    <property type="term" value="P:inner ear development"/>
    <property type="evidence" value="ECO:0000314"/>
    <property type="project" value="MGI"/>
</dbReference>
<dbReference type="GO" id="GO:0002088">
    <property type="term" value="P:lens development in camera-type eye"/>
    <property type="evidence" value="ECO:0000315"/>
    <property type="project" value="MGI"/>
</dbReference>
<dbReference type="GO" id="GO:0070306">
    <property type="term" value="P:lens fiber cell differentiation"/>
    <property type="evidence" value="ECO:0000315"/>
    <property type="project" value="MGI"/>
</dbReference>
<dbReference type="GO" id="GO:0030219">
    <property type="term" value="P:megakaryocyte differentiation"/>
    <property type="evidence" value="ECO:0007669"/>
    <property type="project" value="Ensembl"/>
</dbReference>
<dbReference type="GO" id="GO:0000122">
    <property type="term" value="P:negative regulation of transcription by RNA polymerase II"/>
    <property type="evidence" value="ECO:0000315"/>
    <property type="project" value="MGI"/>
</dbReference>
<dbReference type="GO" id="GO:0010628">
    <property type="term" value="P:positive regulation of gene expression"/>
    <property type="evidence" value="ECO:0000314"/>
    <property type="project" value="MGI"/>
</dbReference>
<dbReference type="GO" id="GO:0045944">
    <property type="term" value="P:positive regulation of transcription by RNA polymerase II"/>
    <property type="evidence" value="ECO:0000314"/>
    <property type="project" value="MGI"/>
</dbReference>
<dbReference type="GO" id="GO:0032330">
    <property type="term" value="P:regulation of chondrocyte differentiation"/>
    <property type="evidence" value="ECO:0000315"/>
    <property type="project" value="MGI"/>
</dbReference>
<dbReference type="GO" id="GO:0006355">
    <property type="term" value="P:regulation of DNA-templated transcription"/>
    <property type="evidence" value="ECO:0000315"/>
    <property type="project" value="MGI"/>
</dbReference>
<dbReference type="GO" id="GO:0007584">
    <property type="term" value="P:response to nutrient"/>
    <property type="evidence" value="ECO:0000315"/>
    <property type="project" value="MGI"/>
</dbReference>
<dbReference type="CDD" id="cd14718">
    <property type="entry name" value="bZIP_Maf_large"/>
    <property type="match status" value="1"/>
</dbReference>
<dbReference type="FunFam" id="1.20.5.170:FF:000016">
    <property type="entry name" value="MAF bZIP transcription factor"/>
    <property type="match status" value="1"/>
</dbReference>
<dbReference type="Gene3D" id="1.20.5.170">
    <property type="match status" value="1"/>
</dbReference>
<dbReference type="InterPro" id="IPR004827">
    <property type="entry name" value="bZIP"/>
</dbReference>
<dbReference type="InterPro" id="IPR004826">
    <property type="entry name" value="bZIP_Maf"/>
</dbReference>
<dbReference type="InterPro" id="IPR046347">
    <property type="entry name" value="bZIP_sf"/>
</dbReference>
<dbReference type="InterPro" id="IPR013592">
    <property type="entry name" value="Maf_TF_N"/>
</dbReference>
<dbReference type="InterPro" id="IPR008917">
    <property type="entry name" value="TF_DNA-bd_sf"/>
</dbReference>
<dbReference type="InterPro" id="IPR024874">
    <property type="entry name" value="Transcription_factor_Maf_fam"/>
</dbReference>
<dbReference type="PANTHER" id="PTHR10129">
    <property type="entry name" value="TRANSCRIPTION FACTOR MAF"/>
    <property type="match status" value="1"/>
</dbReference>
<dbReference type="PANTHER" id="PTHR10129:SF9">
    <property type="entry name" value="TRANSCRIPTION FACTOR MAF"/>
    <property type="match status" value="1"/>
</dbReference>
<dbReference type="Pfam" id="PF03131">
    <property type="entry name" value="bZIP_Maf"/>
    <property type="match status" value="1"/>
</dbReference>
<dbReference type="Pfam" id="PF08383">
    <property type="entry name" value="Maf_N"/>
    <property type="match status" value="1"/>
</dbReference>
<dbReference type="SMART" id="SM00338">
    <property type="entry name" value="BRLZ"/>
    <property type="match status" value="1"/>
</dbReference>
<dbReference type="SUPFAM" id="SSF47454">
    <property type="entry name" value="A DNA-binding domain in eukaryotic transcription factors"/>
    <property type="match status" value="1"/>
</dbReference>
<dbReference type="SUPFAM" id="SSF57959">
    <property type="entry name" value="Leucine zipper domain"/>
    <property type="match status" value="1"/>
</dbReference>
<dbReference type="PROSITE" id="PS50217">
    <property type="entry name" value="BZIP"/>
    <property type="match status" value="1"/>
</dbReference>
<organism>
    <name type="scientific">Mus musculus</name>
    <name type="common">Mouse</name>
    <dbReference type="NCBI Taxonomy" id="10090"/>
    <lineage>
        <taxon>Eukaryota</taxon>
        <taxon>Metazoa</taxon>
        <taxon>Chordata</taxon>
        <taxon>Craniata</taxon>
        <taxon>Vertebrata</taxon>
        <taxon>Euteleostomi</taxon>
        <taxon>Mammalia</taxon>
        <taxon>Eutheria</taxon>
        <taxon>Euarchontoglires</taxon>
        <taxon>Glires</taxon>
        <taxon>Rodentia</taxon>
        <taxon>Myomorpha</taxon>
        <taxon>Muroidea</taxon>
        <taxon>Muridae</taxon>
        <taxon>Murinae</taxon>
        <taxon>Mus</taxon>
        <taxon>Mus</taxon>
    </lineage>
</organism>
<evidence type="ECO:0000250" key="1"/>
<evidence type="ECO:0000250" key="2">
    <source>
        <dbReference type="UniProtKB" id="O75444"/>
    </source>
</evidence>
<evidence type="ECO:0000255" key="3">
    <source>
        <dbReference type="PROSITE-ProRule" id="PRU00978"/>
    </source>
</evidence>
<evidence type="ECO:0000256" key="4">
    <source>
        <dbReference type="SAM" id="MobiDB-lite"/>
    </source>
</evidence>
<evidence type="ECO:0000269" key="5">
    <source>
    </source>
</evidence>
<evidence type="ECO:0000269" key="6">
    <source>
    </source>
</evidence>
<evidence type="ECO:0000269" key="7">
    <source>
    </source>
</evidence>
<evidence type="ECO:0000269" key="8">
    <source>
    </source>
</evidence>
<evidence type="ECO:0000269" key="9">
    <source>
    </source>
</evidence>
<evidence type="ECO:0000269" key="10">
    <source>
    </source>
</evidence>
<evidence type="ECO:0000269" key="11">
    <source>
    </source>
</evidence>
<evidence type="ECO:0000269" key="12">
    <source>
    </source>
</evidence>
<evidence type="ECO:0000269" key="13">
    <source>
    </source>
</evidence>
<evidence type="ECO:0000269" key="14">
    <source>
    </source>
</evidence>
<evidence type="ECO:0000269" key="15">
    <source>
    </source>
</evidence>
<evidence type="ECO:0000269" key="16">
    <source>
    </source>
</evidence>
<evidence type="ECO:0000269" key="17">
    <source>
    </source>
</evidence>
<evidence type="ECO:0000303" key="18">
    <source>
    </source>
</evidence>
<evidence type="ECO:0000303" key="19">
    <source>
    </source>
</evidence>
<evidence type="ECO:0000305" key="20"/>
<comment type="function">
    <text evidence="1 5 6 7 8 9 10 12 13 14 15 16 17">Acts as a transcriptional activator or repressor. When overexpressed, represses anti-oxidant response element (ARE)-mediated transcription. Involved either as an oncogene or as a tumor suppressor, depending on the cell context. Binds to the ARE sites of detoxifying enzyme gene promoters (By similarity). Involved in embryonic lens fiber cell development. Recruits the transcriptional coactivators CREBBP and/or EP300 to crystallin promoters leading to up-regulation of crystallin gene during lens fiber cell differentiation. Activates the expression of IL4 in T helper 2 (Th2) cells. Increases T-cell susceptibility to apoptosis by interacting with MYB and decreasing BCL2 expression. Together with PAX6, transactivates strongly the glucagon gene promoter through the G1 element. Activates transcription of the CD13 proximal promoter in endothelial cells. Represses transcription of the CD13 promoter in early stages of myelopoiesis by affecting the ETS1 and MYB cooperative interaction. Involved in the initial chondrocyte terminal differentiation and the disappearance of hypertrophic chondrocytes during endochondral bone development. Binds to the sequence 5'-[GT]G[GC]N[GT]NCTCAGNN-3' in the L7 promoter. Binds to the T-MARE (Maf response element) sites of lens-specific alpha- and beta-crystallin gene promoters. Binds element G1 on the glucagon promoter. Binds an AT-rich region adjacent to the TGC motif (atypical Maf response element) in the CD13 proximal promoter in endothelial cells. It may interact with additional basic-zipper proteins that determine a subtype of Maf-responsive element binding.</text>
</comment>
<comment type="subunit">
    <text evidence="1">Homodimer or heterodimer with other bHLH-Zip transcription factors. Binds DNA as a homodimer or as a heterodimer. Heterotetramer of two MAF and two USF2. Interacts with PAX6; the interaction is direct. Interacts with MYB; interaction takes place weakly in normal T-cells and increases in T-cells following stimulation through the TCR engagement. Interacts with MYB; the ternary complex formed with MYB and the CD13 promoter is regulated in response to differentiating signals. Interacts with USF2; the interaction inhibits its DNA-binding activity on the L7 promoter. Interacts with CREBBP, EP300 and ETS1 (By similarity).</text>
</comment>
<comment type="interaction">
    <interactant intactId="EBI-3842521">
        <id>P54843</id>
    </interactant>
    <interactant intactId="EBI-927547">
        <id>Q91ZW3</id>
        <label>Smarca5</label>
    </interactant>
    <organismsDiffer>false</organismsDiffer>
    <experiments>2</experiments>
</comment>
<comment type="subcellular location">
    <subcellularLocation>
        <location>Nucleus</location>
    </subcellularLocation>
</comment>
<comment type="alternative products">
    <event type="alternative splicing"/>
    <isoform>
        <id>P54843-1</id>
        <name>1</name>
        <sequence type="displayed"/>
    </isoform>
    <isoform>
        <id>P54843-2</id>
        <name>2</name>
        <name>Long</name>
        <sequence type="described" ref="VSP_036408"/>
    </isoform>
    <isoform>
        <id>P54843-3</id>
        <name>3</name>
        <sequence type="described" ref="VSP_036409"/>
    </isoform>
</comment>
<comment type="tissue specificity">
    <text evidence="11 13 14">Expressed in tubules of the renal cortex and hepatocytes. Expressed in the lens (at protein level). Expressed in pancreatic islets and endothelial cells.</text>
</comment>
<comment type="developmental stage">
    <text evidence="6 8 10 11 14">Expressed in the floor of the diencephalon at 10 dpc (at protein level). Expressed in the midline of the forebrain and in the eye region at 9 dpc. Expressed in the head ectoderm destined to become the lens vesicle at 9 and 10 dpc. Expressed in the lens placode at 10.5 dpc. Expressed in the lens vesicle in both epithelial and fiber cells at 11 dpc. Expressed in secondary fiber cells at the equatorial region that divides the lens into anterior and posterior hemispheres between 11 and 14 dpc. Expressed in the neural tube and in primary fiber cells of the lens at 11.5 dpc. Expressed in proximal tubules of the cortex in the kidney at 16 and 17 dpc. Expressed in hypertrophic chondrocytes at 14.5 to 18.5 dpc. Expressed in the pancreas at 12.5 dpc until the adult stage.</text>
</comment>
<comment type="PTM">
    <text evidence="1">Ubiquitinated, leading to its degradation by the proteasome. Ubiquitination is triggered by glucocorticoids (By similarity).</text>
</comment>
<comment type="PTM">
    <text evidence="1">Phosphorylated by GSK3 and MAPK13 on serine and threonine residues (By similarity). The phosphorylation status can serve to either stimulate or inhibit transcription.</text>
</comment>
<comment type="disruption phenotype">
    <text evidence="5 6 7 8 10">Knockout mice lacking this gene exhibit small eyes or microphthalmia with an absence of normal lens structures, an abnormal chondrocyte development, with terminal differentiation of hypertrophic chondrocytes initially delayed, followed by a subsequent expansion of the hypertrophic chondrocyte domain in the growth plates of embryonic and postnatal long bones. They also show a lack of IL4 production.</text>
</comment>
<comment type="similarity">
    <text evidence="20">Belongs to the bZIP family. Maf subfamily.</text>
</comment>
<accession>P54843</accession>
<accession>Q3V1Z2</accession>
<accession>Q4QY62</accession>
<sequence>MASELAMNNSDLPTSPLAMEYVNDFDLMKFEVKKEPVETDRIISQCGRLIAGGSLSSTPMSTPCSSVPPSPSFSAPSPGSGSEQKAHLEDYYWMTGYPQQLNPEALGFSPEDAVEALISNSHQLQGGFDGYARGAQQLAAAAGAGAGASLGGSGEEMGPAAAVVSAVIAAAAAQSGAAPHYHHHHHHAAGHHHHPTAGAPGAAGGASASASGAGGAGGGGPASAGGGGGGGGGGGTAGAGGALHPHHAAGGLHFDDRFSDEQLVTMSVRELNRQLRGVSKEEVIRLKQKRRTLKNRGYAQSCRFKRVQQRHVLESEKNQLLQQVDHLKQEISRLVRERDAYKEKYEKLVSNGFRENGSSSDNPSSPEFFM</sequence>
<proteinExistence type="evidence at protein level"/>